<dbReference type="EMBL" id="X06707">
    <property type="protein sequence ID" value="CAA29893.1"/>
    <property type="molecule type" value="Genomic_DNA"/>
</dbReference>
<dbReference type="EMBL" id="J03321">
    <property type="protein sequence ID" value="AAA91570.1"/>
    <property type="molecule type" value="Genomic_DNA"/>
</dbReference>
<dbReference type="EMBL" id="M19487">
    <property type="protein sequence ID" value="AAB02587.1"/>
    <property type="status" value="ALT_FRAME"/>
    <property type="molecule type" value="Genomic_DNA"/>
</dbReference>
<dbReference type="EMBL" id="M19487">
    <property type="protein sequence ID" value="AAB02588.1"/>
    <property type="status" value="ALT_FRAME"/>
    <property type="molecule type" value="Genomic_DNA"/>
</dbReference>
<dbReference type="PIR" id="S02220">
    <property type="entry name" value="S02220"/>
</dbReference>
<dbReference type="RefSeq" id="NP_040383.1">
    <property type="nucleotide sequence ID" value="NC_001372.1"/>
</dbReference>
<dbReference type="RefSeq" id="WP_012209815.1">
    <property type="nucleotide sequence ID" value="NZ_CVNC01000027.1"/>
</dbReference>
<dbReference type="RefSeq" id="YP_001569037.1">
    <property type="nucleotide sequence ID" value="NC_010029.2"/>
</dbReference>
<dbReference type="RefSeq" id="YP_001654091.1">
    <property type="nucleotide sequence ID" value="NC_010286.1"/>
</dbReference>
<dbReference type="RefSeq" id="YP_002842070.1">
    <property type="nucleotide sequence ID" value="NC_012631.1"/>
</dbReference>
<dbReference type="OMA" id="TFLDWIV"/>
<proteinExistence type="predicted"/>
<reference key="1">
    <citation type="journal article" date="1988" name="Nucleic Acids Res.">
        <title>Analysis of the entire nucleotide sequence of the cryptic plasmid of Chlamydia trachomatis serovar L1. Evidence for involvement in DNA replication.</title>
        <authorList>
            <person name="Hatt C."/>
            <person name="Ward M.E."/>
            <person name="Clarke I.N."/>
        </authorList>
    </citation>
    <scope>NUCLEOTIDE SEQUENCE [GENOMIC DNA]</scope>
    <source>
        <strain>L1/440/LN</strain>
        <plasmid>pLGV440</plasmid>
    </source>
</reference>
<reference key="2">
    <citation type="journal article" date="1990" name="Plasmid">
        <title>Diversity of the Chlamydia trachomatis common plasmid in biovars with different pathogenicity.</title>
        <authorList>
            <person name="Comanducci M."/>
            <person name="Ricci S."/>
            <person name="Cevenini R."/>
            <person name="Ratti G."/>
        </authorList>
    </citation>
    <scope>NUCLEOTIDE SEQUENCE [GENOMIC DNA]</scope>
    <source>
        <strain>D/GO/86</strain>
        <plasmid>pCHL1</plasmid>
    </source>
</reference>
<reference key="3">
    <citation type="journal article" date="1987" name="Plasmid">
        <title>Characterization and sequence of a plasmid from the trachoma biovar of Chlamydia trachomatis.</title>
        <authorList>
            <person name="Sriprakash K.S."/>
            <person name="Macavoy E.S."/>
        </authorList>
    </citation>
    <scope>NUCLEOTIDE SEQUENCE [GENOMIC DNA]</scope>
    <source>
        <strain>Serotype B</strain>
        <plasmid>pCTT1</plasmid>
    </source>
</reference>
<keyword id="KW-0614">Plasmid</keyword>
<name>GP2D_CHLTH</name>
<comment type="miscellaneous">
    <text>PGP2-D is required for growth within mammalian cells.</text>
</comment>
<comment type="sequence caution" evidence="1">
    <conflict type="frameshift">
        <sequence resource="EMBL-CDS" id="AAB02588"/>
    </conflict>
</comment>
<geneLocation type="plasmid">
    <name>pLGV440</name>
</geneLocation>
<geneLocation type="plasmid">
    <name>pCHL1</name>
</geneLocation>
<geneLocation type="plasmid">
    <name>pCTT1</name>
</geneLocation>
<organism>
    <name type="scientific">Chlamydia trachomatis</name>
    <dbReference type="NCBI Taxonomy" id="813"/>
    <lineage>
        <taxon>Bacteria</taxon>
        <taxon>Pseudomonadati</taxon>
        <taxon>Chlamydiota</taxon>
        <taxon>Chlamydiia</taxon>
        <taxon>Chlamydiales</taxon>
        <taxon>Chlamydiaceae</taxon>
        <taxon>Chlamydia/Chlamydophila group</taxon>
        <taxon>Chlamydia</taxon>
    </lineage>
</organism>
<protein>
    <recommendedName>
        <fullName>Virulence plasmid protein pGP2-D</fullName>
    </recommendedName>
    <alternativeName>
        <fullName>Protein P-4</fullName>
    </alternativeName>
</protein>
<accession>P0CE17</accession>
<accession>P08782</accession>
<accession>Q46429</accession>
<accession>Q46430</accession>
<evidence type="ECO:0000305" key="1"/>
<sequence>MVNYSNCHFIKSPIHLENQKFGRRPGQSIKISPKLAQNGMVEVIGLDFLSSHYHALAAIQRLLTATNYKGNTKGVVLSRESNSFQFEGWIPRIRFTKTEFLEAYGVKRYKTSRNKYEFSGKEAETALEALYHLGHQPFLIVATRTRWTNGTQIVDRYQTLSPIIRIYEGWEGLTDEENIDIDLTPFNSPSTRKHKGFVVEPCPILVDQIESYFVIKPANVYQEIKMRFPNASKYAYTFIDWVITAAAKKRRKLTKDNSWPENLFLNVNVKSLAYILRMNRYICTRNWKKIELAIDKCIEIAIQLGWLSRRKRIEFLDSSKLSKKEILYLNKERFEEITKKSKEQMEQLEQESIN</sequence>
<feature type="chain" id="PRO_0000218341" description="Virulence plasmid protein pGP2-D">
    <location>
        <begin position="1"/>
        <end position="354"/>
    </location>
</feature>
<feature type="sequence variant" description="In plasmid pCTT1.">
    <original>E</original>
    <variation>V</variation>
    <location>
        <position position="168"/>
    </location>
</feature>
<feature type="sequence variant" description="In plasmid pCHL1.">
    <original>S</original>
    <variation>P</variation>
    <location>
        <position position="190"/>
    </location>
</feature>
<feature type="sequence variant" description="In plasmid pCHL1 and plasmid pCTT1.">
    <original>F</original>
    <variation>L</variation>
    <location>
        <position position="264"/>
    </location>
</feature>
<feature type="sequence conflict" description="In Ref. 3." evidence="1" ref="3">
    <location>
        <begin position="348"/>
        <end position="350"/>
    </location>
</feature>